<protein>
    <recommendedName>
        <fullName evidence="2">Type II methyltransferase M.BglII</fullName>
        <shortName evidence="3">M.BglII</shortName>
        <ecNumber>2.1.1.113</ecNumber>
    </recommendedName>
    <alternativeName>
        <fullName>Modification methylase BglII</fullName>
    </alternativeName>
    <alternativeName>
        <fullName>N(4)- cytosine-specific methyltransferase BglII</fullName>
    </alternativeName>
</protein>
<feature type="chain" id="PRO_0000087924" description="Type II methyltransferase M.BglII">
    <location>
        <begin position="1"/>
        <end position="360"/>
    </location>
</feature>
<feature type="region of interest" description="Disordered" evidence="1">
    <location>
        <begin position="316"/>
        <end position="341"/>
    </location>
</feature>
<feature type="compositionally biased region" description="Basic and acidic residues" evidence="1">
    <location>
        <begin position="326"/>
        <end position="341"/>
    </location>
</feature>
<reference key="1">
    <citation type="journal article" date="1997" name="Gene">
        <title>Cloning and characterization of the BglII restriction-modification system reveals a possible evolutionary footprint.</title>
        <authorList>
            <person name="Anton B.P."/>
            <person name="Heiter D.F."/>
            <person name="Benner J.S."/>
            <person name="Hess E.J."/>
            <person name="Greenough L."/>
            <person name="Moran L.S."/>
            <person name="Slatko B.E."/>
            <person name="Brooks J.E."/>
        </authorList>
    </citation>
    <scope>NUCLEOTIDE SEQUENCE [GENOMIC DNA]</scope>
    <scope>FUNCTION</scope>
    <source>
        <strain>Globigii / RUB562</strain>
    </source>
</reference>
<reference key="2">
    <citation type="journal article" date="2003" name="Nucleic Acids Res.">
        <title>A nomenclature for restriction enzymes, DNA methyltransferases, homing endonucleases and their genes.</title>
        <authorList>
            <person name="Roberts R.J."/>
            <person name="Belfort M."/>
            <person name="Bestor T."/>
            <person name="Bhagwat A.S."/>
            <person name="Bickle T.A."/>
            <person name="Bitinaite J."/>
            <person name="Blumenthal R.M."/>
            <person name="Degtyarev S.K."/>
            <person name="Dryden D.T."/>
            <person name="Dybvig K."/>
            <person name="Firman K."/>
            <person name="Gromova E.S."/>
            <person name="Gumport R.I."/>
            <person name="Halford S.E."/>
            <person name="Hattman S."/>
            <person name="Heitman J."/>
            <person name="Hornby D.P."/>
            <person name="Janulaitis A."/>
            <person name="Jeltsch A."/>
            <person name="Josephsen J."/>
            <person name="Kiss A."/>
            <person name="Klaenhammer T.R."/>
            <person name="Kobayashi I."/>
            <person name="Kong H."/>
            <person name="Krueger D.H."/>
            <person name="Lacks S."/>
            <person name="Marinus M.G."/>
            <person name="Miyahara M."/>
            <person name="Morgan R.D."/>
            <person name="Murray N.E."/>
            <person name="Nagaraja V."/>
            <person name="Piekarowicz A."/>
            <person name="Pingoud A."/>
            <person name="Raleigh E."/>
            <person name="Rao D.N."/>
            <person name="Reich N."/>
            <person name="Repin V.E."/>
            <person name="Selker E.U."/>
            <person name="Shaw P.C."/>
            <person name="Stein D.C."/>
            <person name="Stoddard B.L."/>
            <person name="Szybalski W."/>
            <person name="Trautner T.A."/>
            <person name="Van Etten J.L."/>
            <person name="Vitor J.M."/>
            <person name="Wilson G.G."/>
            <person name="Xu S.Y."/>
        </authorList>
    </citation>
    <scope>NOMENCLATURE</scope>
    <scope>SUBTYPE</scope>
</reference>
<dbReference type="EC" id="2.1.1.113"/>
<dbReference type="EMBL" id="U49842">
    <property type="protein sequence ID" value="AAC45061.1"/>
    <property type="molecule type" value="Genomic_DNA"/>
</dbReference>
<dbReference type="PIR" id="JC6322">
    <property type="entry name" value="JC6322"/>
</dbReference>
<dbReference type="SMR" id="Q45489"/>
<dbReference type="REBASE" id="156140">
    <property type="entry name" value="M.BsuHJ06ORF1941P"/>
</dbReference>
<dbReference type="BRENDA" id="2.1.1.113">
    <property type="organism ID" value="658"/>
</dbReference>
<dbReference type="PRO" id="PR:Q45489"/>
<dbReference type="GO" id="GO:0005737">
    <property type="term" value="C:cytoplasm"/>
    <property type="evidence" value="ECO:0007669"/>
    <property type="project" value="TreeGrafter"/>
</dbReference>
<dbReference type="GO" id="GO:0003677">
    <property type="term" value="F:DNA binding"/>
    <property type="evidence" value="ECO:0007669"/>
    <property type="project" value="UniProtKB-KW"/>
</dbReference>
<dbReference type="GO" id="GO:0008170">
    <property type="term" value="F:N-methyltransferase activity"/>
    <property type="evidence" value="ECO:0007669"/>
    <property type="project" value="InterPro"/>
</dbReference>
<dbReference type="GO" id="GO:0009007">
    <property type="term" value="F:site-specific DNA-methyltransferase (adenine-specific) activity"/>
    <property type="evidence" value="ECO:0007669"/>
    <property type="project" value="TreeGrafter"/>
</dbReference>
<dbReference type="GO" id="GO:0015667">
    <property type="term" value="F:site-specific DNA-methyltransferase (cytosine-N4-specific) activity"/>
    <property type="evidence" value="ECO:0007669"/>
    <property type="project" value="UniProtKB-EC"/>
</dbReference>
<dbReference type="GO" id="GO:0009307">
    <property type="term" value="P:DNA restriction-modification system"/>
    <property type="evidence" value="ECO:0007669"/>
    <property type="project" value="UniProtKB-KW"/>
</dbReference>
<dbReference type="GO" id="GO:0032259">
    <property type="term" value="P:methylation"/>
    <property type="evidence" value="ECO:0007669"/>
    <property type="project" value="UniProtKB-KW"/>
</dbReference>
<dbReference type="Gene3D" id="3.40.50.150">
    <property type="entry name" value="Vaccinia Virus protein VP39"/>
    <property type="match status" value="1"/>
</dbReference>
<dbReference type="InterPro" id="IPR002941">
    <property type="entry name" value="DNA_methylase_N4/N6"/>
</dbReference>
<dbReference type="InterPro" id="IPR017985">
    <property type="entry name" value="MeTrfase_CN4_CS"/>
</dbReference>
<dbReference type="InterPro" id="IPR001091">
    <property type="entry name" value="RM_Methyltransferase"/>
</dbReference>
<dbReference type="InterPro" id="IPR029063">
    <property type="entry name" value="SAM-dependent_MTases_sf"/>
</dbReference>
<dbReference type="PANTHER" id="PTHR13370">
    <property type="entry name" value="RNA METHYLASE-RELATED"/>
    <property type="match status" value="1"/>
</dbReference>
<dbReference type="PANTHER" id="PTHR13370:SF3">
    <property type="entry name" value="TRNA (GUANINE(10)-N2)-METHYLTRANSFERASE HOMOLOG"/>
    <property type="match status" value="1"/>
</dbReference>
<dbReference type="Pfam" id="PF01555">
    <property type="entry name" value="N6_N4_Mtase"/>
    <property type="match status" value="1"/>
</dbReference>
<dbReference type="PRINTS" id="PR00508">
    <property type="entry name" value="S21N4MTFRASE"/>
</dbReference>
<dbReference type="SUPFAM" id="SSF53335">
    <property type="entry name" value="S-adenosyl-L-methionine-dependent methyltransferases"/>
    <property type="match status" value="1"/>
</dbReference>
<dbReference type="PROSITE" id="PS00093">
    <property type="entry name" value="N4_MTASE"/>
    <property type="match status" value="1"/>
</dbReference>
<sequence length="360" mass="42043">MSEDQYKQIKLHLGMEDDNEDLPNHIPSSFPKQHLNKIYNGDTMNMLLDIPDNSVDLVVTSPPYNINKFKNDRRPLEEYLKWQTEIIEQCHRVLKPSGSIFWQVGTYVNDSGAHIPLDIRFFPIFESLGMFPRNRIVWVRPHGLHANKKFAGRHETILWFTKTPEYKFFLDPIRVPQKYANKKHYKGDKKGELSGDPLGKNPGDVWAFRNVRHNHEEDTIHPTQYPEDMIERIVLSTTEPNDIVLDPFIGMGTTASVAKNLNRYFYGAEIEKEYVDIAYQILSGEPDENNNFPNLKTLRQYCEKNGIIDPSQYTFTRQRKGSKPSLDSKAHPEEHHKKEIVERIEFEAENSVYKKVQNEQ</sequence>
<organism>
    <name type="scientific">Bacillus subtilis</name>
    <dbReference type="NCBI Taxonomy" id="1423"/>
    <lineage>
        <taxon>Bacteria</taxon>
        <taxon>Bacillati</taxon>
        <taxon>Bacillota</taxon>
        <taxon>Bacilli</taxon>
        <taxon>Bacillales</taxon>
        <taxon>Bacillaceae</taxon>
        <taxon>Bacillus</taxon>
    </lineage>
</organism>
<accession>Q45489</accession>
<gene>
    <name evidence="3" type="primary">bglIIM</name>
</gene>
<keyword id="KW-0238">DNA-binding</keyword>
<keyword id="KW-0489">Methyltransferase</keyword>
<keyword id="KW-0680">Restriction system</keyword>
<keyword id="KW-0949">S-adenosyl-L-methionine</keyword>
<keyword id="KW-0808">Transferase</keyword>
<name>MTB2_BACIU</name>
<proteinExistence type="inferred from homology"/>
<evidence type="ECO:0000256" key="1">
    <source>
        <dbReference type="SAM" id="MobiDB-lite"/>
    </source>
</evidence>
<evidence type="ECO:0000303" key="2">
    <source>
    </source>
</evidence>
<evidence type="ECO:0000303" key="3">
    <source>
    </source>
</evidence>
<evidence type="ECO:0000305" key="4"/>
<evidence type="ECO:0000305" key="5">
    <source>
    </source>
</evidence>
<comment type="function">
    <text evidence="2 5">A beta subtype methylase, recognizes the double-stranded sequence 5'-AGATCT-3', methylates C-5 on both strands, and protects the DNA from cleavage by the BglII endonuclease.</text>
</comment>
<comment type="catalytic activity">
    <reaction>
        <text>a 2'-deoxycytidine in DNA + S-adenosyl-L-methionine = an N(4)-methyl-2'-deoxycytidine in DNA + S-adenosyl-L-homocysteine + H(+)</text>
        <dbReference type="Rhea" id="RHEA:16857"/>
        <dbReference type="Rhea" id="RHEA-COMP:11369"/>
        <dbReference type="Rhea" id="RHEA-COMP:13674"/>
        <dbReference type="ChEBI" id="CHEBI:15378"/>
        <dbReference type="ChEBI" id="CHEBI:57856"/>
        <dbReference type="ChEBI" id="CHEBI:59789"/>
        <dbReference type="ChEBI" id="CHEBI:85452"/>
        <dbReference type="ChEBI" id="CHEBI:137933"/>
        <dbReference type="EC" id="2.1.1.113"/>
    </reaction>
</comment>
<comment type="similarity">
    <text evidence="4">Belongs to the N(4)/N(6)-methyltransferase family. N(4) subfamily.</text>
</comment>